<name>KATG_FLAJ1</name>
<gene>
    <name evidence="1" type="primary">katG</name>
    <name type="ordered locus">Fjoh_3897</name>
</gene>
<organism>
    <name type="scientific">Flavobacterium johnsoniae (strain ATCC 17061 / DSM 2064 / JCM 8514 / BCRC 14874 / CCUG 350202 / NBRC 14942 / NCIMB 11054 / UW101)</name>
    <name type="common">Cytophaga johnsonae</name>
    <dbReference type="NCBI Taxonomy" id="376686"/>
    <lineage>
        <taxon>Bacteria</taxon>
        <taxon>Pseudomonadati</taxon>
        <taxon>Bacteroidota</taxon>
        <taxon>Flavobacteriia</taxon>
        <taxon>Flavobacteriales</taxon>
        <taxon>Flavobacteriaceae</taxon>
        <taxon>Flavobacterium</taxon>
    </lineage>
</organism>
<protein>
    <recommendedName>
        <fullName evidence="1">Catalase-peroxidase</fullName>
        <shortName evidence="1">CP</shortName>
        <ecNumber evidence="1">1.11.1.21</ecNumber>
    </recommendedName>
    <alternativeName>
        <fullName evidence="1">Peroxidase/catalase</fullName>
    </alternativeName>
</protein>
<evidence type="ECO:0000255" key="1">
    <source>
        <dbReference type="HAMAP-Rule" id="MF_01961"/>
    </source>
</evidence>
<evidence type="ECO:0000256" key="2">
    <source>
        <dbReference type="SAM" id="MobiDB-lite"/>
    </source>
</evidence>
<feature type="chain" id="PRO_0000354787" description="Catalase-peroxidase">
    <location>
        <begin position="1"/>
        <end position="757"/>
    </location>
</feature>
<feature type="region of interest" description="Disordered" evidence="2">
    <location>
        <begin position="1"/>
        <end position="28"/>
    </location>
</feature>
<feature type="compositionally biased region" description="Polar residues" evidence="2">
    <location>
        <begin position="17"/>
        <end position="28"/>
    </location>
</feature>
<feature type="active site" description="Proton acceptor" evidence="1">
    <location>
        <position position="101"/>
    </location>
</feature>
<feature type="binding site" description="axial binding residue" evidence="1">
    <location>
        <position position="288"/>
    </location>
    <ligand>
        <name>heme b</name>
        <dbReference type="ChEBI" id="CHEBI:60344"/>
    </ligand>
    <ligandPart>
        <name>Fe</name>
        <dbReference type="ChEBI" id="CHEBI:18248"/>
    </ligandPart>
</feature>
<feature type="site" description="Transition state stabilizer" evidence="1">
    <location>
        <position position="97"/>
    </location>
</feature>
<feature type="cross-link" description="Tryptophyl-tyrosyl-methioninium (Trp-Tyr) (with M-273)" evidence="1">
    <location>
        <begin position="100"/>
        <end position="247"/>
    </location>
</feature>
<feature type="cross-link" description="Tryptophyl-tyrosyl-methioninium (Tyr-Met) (with W-100)" evidence="1">
    <location>
        <begin position="247"/>
        <end position="273"/>
    </location>
</feature>
<dbReference type="EC" id="1.11.1.21" evidence="1"/>
<dbReference type="EMBL" id="CP000685">
    <property type="protein sequence ID" value="ABQ06908.1"/>
    <property type="molecule type" value="Genomic_DNA"/>
</dbReference>
<dbReference type="RefSeq" id="WP_012025874.1">
    <property type="nucleotide sequence ID" value="NC_009441.1"/>
</dbReference>
<dbReference type="SMR" id="A5FD11"/>
<dbReference type="STRING" id="376686.Fjoh_3897"/>
<dbReference type="PeroxiBase" id="3617">
    <property type="entry name" value="FjCP01_UW101"/>
</dbReference>
<dbReference type="KEGG" id="fjo:Fjoh_3897"/>
<dbReference type="eggNOG" id="COG0376">
    <property type="taxonomic scope" value="Bacteria"/>
</dbReference>
<dbReference type="HOGENOM" id="CLU_025424_2_0_10"/>
<dbReference type="OrthoDB" id="9759743at2"/>
<dbReference type="Proteomes" id="UP000006694">
    <property type="component" value="Chromosome"/>
</dbReference>
<dbReference type="GO" id="GO:0005829">
    <property type="term" value="C:cytosol"/>
    <property type="evidence" value="ECO:0007669"/>
    <property type="project" value="TreeGrafter"/>
</dbReference>
<dbReference type="GO" id="GO:0004096">
    <property type="term" value="F:catalase activity"/>
    <property type="evidence" value="ECO:0007669"/>
    <property type="project" value="UniProtKB-UniRule"/>
</dbReference>
<dbReference type="GO" id="GO:0020037">
    <property type="term" value="F:heme binding"/>
    <property type="evidence" value="ECO:0007669"/>
    <property type="project" value="InterPro"/>
</dbReference>
<dbReference type="GO" id="GO:0046872">
    <property type="term" value="F:metal ion binding"/>
    <property type="evidence" value="ECO:0007669"/>
    <property type="project" value="UniProtKB-KW"/>
</dbReference>
<dbReference type="GO" id="GO:0070301">
    <property type="term" value="P:cellular response to hydrogen peroxide"/>
    <property type="evidence" value="ECO:0007669"/>
    <property type="project" value="TreeGrafter"/>
</dbReference>
<dbReference type="GO" id="GO:0042744">
    <property type="term" value="P:hydrogen peroxide catabolic process"/>
    <property type="evidence" value="ECO:0007669"/>
    <property type="project" value="UniProtKB-KW"/>
</dbReference>
<dbReference type="CDD" id="cd00649">
    <property type="entry name" value="catalase_peroxidase_1"/>
    <property type="match status" value="1"/>
</dbReference>
<dbReference type="CDD" id="cd08200">
    <property type="entry name" value="catalase_peroxidase_2"/>
    <property type="match status" value="1"/>
</dbReference>
<dbReference type="FunFam" id="1.10.420.10:FF:000002">
    <property type="entry name" value="Catalase-peroxidase"/>
    <property type="match status" value="1"/>
</dbReference>
<dbReference type="FunFam" id="1.10.420.10:FF:000004">
    <property type="entry name" value="Catalase-peroxidase"/>
    <property type="match status" value="1"/>
</dbReference>
<dbReference type="FunFam" id="1.10.520.10:FF:000002">
    <property type="entry name" value="Catalase-peroxidase"/>
    <property type="match status" value="1"/>
</dbReference>
<dbReference type="Gene3D" id="1.10.520.10">
    <property type="match status" value="2"/>
</dbReference>
<dbReference type="Gene3D" id="1.10.420.10">
    <property type="entry name" value="Peroxidase, domain 2"/>
    <property type="match status" value="2"/>
</dbReference>
<dbReference type="HAMAP" id="MF_01961">
    <property type="entry name" value="Catal_peroxid"/>
    <property type="match status" value="1"/>
</dbReference>
<dbReference type="InterPro" id="IPR000763">
    <property type="entry name" value="Catalase_peroxidase"/>
</dbReference>
<dbReference type="InterPro" id="IPR002016">
    <property type="entry name" value="Haem_peroxidase"/>
</dbReference>
<dbReference type="InterPro" id="IPR010255">
    <property type="entry name" value="Haem_peroxidase_sf"/>
</dbReference>
<dbReference type="InterPro" id="IPR019794">
    <property type="entry name" value="Peroxidases_AS"/>
</dbReference>
<dbReference type="InterPro" id="IPR019793">
    <property type="entry name" value="Peroxidases_heam-ligand_BS"/>
</dbReference>
<dbReference type="NCBIfam" id="TIGR00198">
    <property type="entry name" value="cat_per_HPI"/>
    <property type="match status" value="1"/>
</dbReference>
<dbReference type="NCBIfam" id="NF011635">
    <property type="entry name" value="PRK15061.1"/>
    <property type="match status" value="1"/>
</dbReference>
<dbReference type="PANTHER" id="PTHR30555:SF0">
    <property type="entry name" value="CATALASE-PEROXIDASE"/>
    <property type="match status" value="1"/>
</dbReference>
<dbReference type="PANTHER" id="PTHR30555">
    <property type="entry name" value="HYDROPEROXIDASE I, BIFUNCTIONAL CATALASE-PEROXIDASE"/>
    <property type="match status" value="1"/>
</dbReference>
<dbReference type="Pfam" id="PF00141">
    <property type="entry name" value="peroxidase"/>
    <property type="match status" value="2"/>
</dbReference>
<dbReference type="PRINTS" id="PR00460">
    <property type="entry name" value="BPEROXIDASE"/>
</dbReference>
<dbReference type="PRINTS" id="PR00458">
    <property type="entry name" value="PEROXIDASE"/>
</dbReference>
<dbReference type="SUPFAM" id="SSF48113">
    <property type="entry name" value="Heme-dependent peroxidases"/>
    <property type="match status" value="2"/>
</dbReference>
<dbReference type="PROSITE" id="PS00435">
    <property type="entry name" value="PEROXIDASE_1"/>
    <property type="match status" value="1"/>
</dbReference>
<dbReference type="PROSITE" id="PS00436">
    <property type="entry name" value="PEROXIDASE_2"/>
    <property type="match status" value="1"/>
</dbReference>
<dbReference type="PROSITE" id="PS50873">
    <property type="entry name" value="PEROXIDASE_4"/>
    <property type="match status" value="1"/>
</dbReference>
<reference key="1">
    <citation type="journal article" date="2009" name="Appl. Environ. Microbiol.">
        <title>Novel features of the polysaccharide-digesting gliding bacterium Flavobacterium johnsoniae as revealed by genome sequence analysis.</title>
        <authorList>
            <person name="McBride M.J."/>
            <person name="Xie G."/>
            <person name="Martens E.C."/>
            <person name="Lapidus A."/>
            <person name="Henrissat B."/>
            <person name="Rhodes R.G."/>
            <person name="Goltsman E."/>
            <person name="Wang W."/>
            <person name="Xu J."/>
            <person name="Hunnicutt D.W."/>
            <person name="Staroscik A.M."/>
            <person name="Hoover T.R."/>
            <person name="Cheng Y.Q."/>
            <person name="Stein J.L."/>
        </authorList>
    </citation>
    <scope>NUCLEOTIDE SEQUENCE [LARGE SCALE GENOMIC DNA]</scope>
    <source>
        <strain>ATCC 17061 / DSM 2064 / JCM 8514 / BCRC 14874 / CCUG 350202 / NBRC 14942 / NCIMB 11054 / UW101</strain>
    </source>
</reference>
<sequence>MENQSNDISKCPFHNGSMDNQAASGTKNNDWWPKQLKVNILRQNSSLSNPLSKDFDYAEAFKTLDLEAVKKDLHVLMTDSQDWWPADFGHYGGLFIRMAWHSAGTYRVHDGRGGAGAGQQRFAPLNSWPDNVSLDKARRLLWPIKQKYGQKISWADLMILTGNVALESMGFKTFGFAGGRADVWEPDESVYWGSETTWLGGDERYNNGSDGVPKDHGVVSADDDADGKVHSRNLEKPLAAVQMGLIYVNPEGPDGNPDPILAAKDIRDTFGRMAMNDEETVALIAGGHTFGKTHGAASSDHVDKEPEAAGLELQGFGWKNSFGSGKGADAITSGLEVTWTKTPTQWSNNFFENLFAFEWELSKSPAGAHQWVAKNAEAIIPDAFDSTKKHLPTMLTTDLSLRLDPEYEKISRRFLENPDQFADAFSRAWFKLTHRDMGPRARYLGPDVPQEVLLWQDPIPEVNHKLIDENDIKQLKEKILNSGLSISQLVAAAWASASTFRGSDKRGGANGARVRLAPQKDWEVNNPAKLAQVLSKLETIQTEFNASQNDGKKVSLADLIVLAGSAGVEKAAKDAGSSVTVSFNPGRMDASAEETDVESFGYLEPKADGFRNYRKTKSAVSTEELLIDKANLLTLTAPELTVLLGGLRVLDINADGSKNGVFTHRPGQLTNDFFVNLLDMNTQWQAVSNDKELYAGNDRSTGQPKWIATRADLVFGSNSELRAVAEVYASTDANEKFVNDFIKAWTKVMNLDRFDLA</sequence>
<accession>A5FD11</accession>
<proteinExistence type="inferred from homology"/>
<comment type="function">
    <text evidence="1">Bifunctional enzyme with both catalase and broad-spectrum peroxidase activity.</text>
</comment>
<comment type="catalytic activity">
    <reaction evidence="1">
        <text>H2O2 + AH2 = A + 2 H2O</text>
        <dbReference type="Rhea" id="RHEA:30275"/>
        <dbReference type="ChEBI" id="CHEBI:13193"/>
        <dbReference type="ChEBI" id="CHEBI:15377"/>
        <dbReference type="ChEBI" id="CHEBI:16240"/>
        <dbReference type="ChEBI" id="CHEBI:17499"/>
        <dbReference type="EC" id="1.11.1.21"/>
    </reaction>
</comment>
<comment type="catalytic activity">
    <reaction evidence="1">
        <text>2 H2O2 = O2 + 2 H2O</text>
        <dbReference type="Rhea" id="RHEA:20309"/>
        <dbReference type="ChEBI" id="CHEBI:15377"/>
        <dbReference type="ChEBI" id="CHEBI:15379"/>
        <dbReference type="ChEBI" id="CHEBI:16240"/>
        <dbReference type="EC" id="1.11.1.21"/>
    </reaction>
</comment>
<comment type="cofactor">
    <cofactor evidence="1">
        <name>heme b</name>
        <dbReference type="ChEBI" id="CHEBI:60344"/>
    </cofactor>
    <text evidence="1">Binds 1 heme b (iron(II)-protoporphyrin IX) group per dimer.</text>
</comment>
<comment type="subunit">
    <text evidence="1">Homodimer or homotetramer.</text>
</comment>
<comment type="PTM">
    <text evidence="1">Formation of the three residue Trp-Tyr-Met cross-link is important for the catalase, but not the peroxidase activity of the enzyme.</text>
</comment>
<comment type="similarity">
    <text evidence="1">Belongs to the peroxidase family. Peroxidase/catalase subfamily.</text>
</comment>
<keyword id="KW-0349">Heme</keyword>
<keyword id="KW-0376">Hydrogen peroxide</keyword>
<keyword id="KW-0408">Iron</keyword>
<keyword id="KW-0479">Metal-binding</keyword>
<keyword id="KW-0560">Oxidoreductase</keyword>
<keyword id="KW-0575">Peroxidase</keyword>